<keyword id="KW-0007">Acetylation</keyword>
<keyword id="KW-0344">Guanine-nucleotide releasing factor</keyword>
<keyword id="KW-0597">Phosphoprotein</keyword>
<keyword id="KW-1185">Reference proteome</keyword>
<keyword id="KW-0677">Repeat</keyword>
<evidence type="ECO:0000250" key="1"/>
<evidence type="ECO:0000250" key="2">
    <source>
        <dbReference type="UniProtKB" id="Q96Q42"/>
    </source>
</evidence>
<evidence type="ECO:0000255" key="3">
    <source>
        <dbReference type="PROSITE-ProRule" id="PRU00062"/>
    </source>
</evidence>
<evidence type="ECO:0000255" key="4">
    <source>
        <dbReference type="PROSITE-ProRule" id="PRU00550"/>
    </source>
</evidence>
<evidence type="ECO:0000256" key="5">
    <source>
        <dbReference type="SAM" id="MobiDB-lite"/>
    </source>
</evidence>
<evidence type="ECO:0000269" key="6">
    <source>
    </source>
</evidence>
<evidence type="ECO:0007744" key="7">
    <source>
    </source>
</evidence>
<organism>
    <name type="scientific">Rattus norvegicus</name>
    <name type="common">Rat</name>
    <dbReference type="NCBI Taxonomy" id="10116"/>
    <lineage>
        <taxon>Eukaryota</taxon>
        <taxon>Metazoa</taxon>
        <taxon>Chordata</taxon>
        <taxon>Craniata</taxon>
        <taxon>Vertebrata</taxon>
        <taxon>Euteleostomi</taxon>
        <taxon>Mammalia</taxon>
        <taxon>Eutheria</taxon>
        <taxon>Euarchontoglires</taxon>
        <taxon>Glires</taxon>
        <taxon>Rodentia</taxon>
        <taxon>Myomorpha</taxon>
        <taxon>Muroidea</taxon>
        <taxon>Muridae</taxon>
        <taxon>Murinae</taxon>
        <taxon>Rattus</taxon>
    </lineage>
</organism>
<feature type="chain" id="PRO_0000306085" description="Alsin">
    <location>
        <begin position="1"/>
        <end position="1651"/>
    </location>
</feature>
<feature type="repeat" description="RCC1 1">
    <location>
        <begin position="59"/>
        <end position="108"/>
    </location>
</feature>
<feature type="repeat" description="RCC1 2">
    <location>
        <begin position="109"/>
        <end position="167"/>
    </location>
</feature>
<feature type="repeat" description="RCC1 3">
    <location>
        <begin position="169"/>
        <end position="218"/>
    </location>
</feature>
<feature type="repeat" description="RCC1 4">
    <location>
        <begin position="519"/>
        <end position="570"/>
    </location>
</feature>
<feature type="repeat" description="RCC1 5">
    <location>
        <begin position="572"/>
        <end position="621"/>
    </location>
</feature>
<feature type="domain" description="DH" evidence="3">
    <location>
        <begin position="684"/>
        <end position="879"/>
    </location>
</feature>
<feature type="domain" description="PH">
    <location>
        <begin position="895"/>
        <end position="1001"/>
    </location>
</feature>
<feature type="repeat" description="MORN 1">
    <location>
        <begin position="1043"/>
        <end position="1065"/>
    </location>
</feature>
<feature type="repeat" description="MORN 2">
    <location>
        <begin position="1066"/>
        <end position="1088"/>
    </location>
</feature>
<feature type="repeat" description="MORN 3">
    <location>
        <begin position="1094"/>
        <end position="1116"/>
    </location>
</feature>
<feature type="repeat" description="MORN 4">
    <location>
        <begin position="1117"/>
        <end position="1139"/>
    </location>
</feature>
<feature type="repeat" description="MORN 5">
    <location>
        <begin position="1145"/>
        <end position="1167"/>
    </location>
</feature>
<feature type="repeat" description="MORN 6">
    <location>
        <begin position="1169"/>
        <end position="1191"/>
    </location>
</feature>
<feature type="repeat" description="MORN 7">
    <location>
        <begin position="1192"/>
        <end position="1214"/>
    </location>
</feature>
<feature type="repeat" description="MORN 8">
    <location>
        <begin position="1215"/>
        <end position="1238"/>
    </location>
</feature>
<feature type="domain" description="VPS9" evidence="4">
    <location>
        <begin position="1507"/>
        <end position="1651"/>
    </location>
</feature>
<feature type="region of interest" description="Disordered" evidence="5">
    <location>
        <begin position="444"/>
        <end position="476"/>
    </location>
</feature>
<feature type="compositionally biased region" description="Polar residues" evidence="5">
    <location>
        <begin position="450"/>
        <end position="461"/>
    </location>
</feature>
<feature type="modified residue" description="Phosphoserine" evidence="2">
    <location>
        <position position="459"/>
    </location>
</feature>
<feature type="modified residue" description="Phosphoserine" evidence="2">
    <location>
        <position position="460"/>
    </location>
</feature>
<feature type="modified residue" description="Phosphoserine" evidence="7">
    <location>
        <position position="477"/>
    </location>
</feature>
<feature type="modified residue" description="Phosphoserine" evidence="7">
    <location>
        <position position="486"/>
    </location>
</feature>
<feature type="modified residue" description="Phosphothreonine" evidence="7">
    <location>
        <position position="504"/>
    </location>
</feature>
<feature type="modified residue" description="N6-acetyllysine" evidence="2">
    <location>
        <position position="527"/>
    </location>
</feature>
<feature type="modified residue" description="Phosphoserine" evidence="7">
    <location>
        <position position="1329"/>
    </location>
</feature>
<proteinExistence type="evidence at protein level"/>
<accession>P0C5Y8</accession>
<reference key="1">
    <citation type="journal article" date="2004" name="Nature">
        <title>Genome sequence of the Brown Norway rat yields insights into mammalian evolution.</title>
        <authorList>
            <person name="Gibbs R.A."/>
            <person name="Weinstock G.M."/>
            <person name="Metzker M.L."/>
            <person name="Muzny D.M."/>
            <person name="Sodergren E.J."/>
            <person name="Scherer S."/>
            <person name="Scott G."/>
            <person name="Steffen D."/>
            <person name="Worley K.C."/>
            <person name="Burch P.E."/>
            <person name="Okwuonu G."/>
            <person name="Hines S."/>
            <person name="Lewis L."/>
            <person name="Deramo C."/>
            <person name="Delgado O."/>
            <person name="Dugan-Rocha S."/>
            <person name="Miner G."/>
            <person name="Morgan M."/>
            <person name="Hawes A."/>
            <person name="Gill R."/>
            <person name="Holt R.A."/>
            <person name="Adams M.D."/>
            <person name="Amanatides P.G."/>
            <person name="Baden-Tillson H."/>
            <person name="Barnstead M."/>
            <person name="Chin S."/>
            <person name="Evans C.A."/>
            <person name="Ferriera S."/>
            <person name="Fosler C."/>
            <person name="Glodek A."/>
            <person name="Gu Z."/>
            <person name="Jennings D."/>
            <person name="Kraft C.L."/>
            <person name="Nguyen T."/>
            <person name="Pfannkoch C.M."/>
            <person name="Sitter C."/>
            <person name="Sutton G.G."/>
            <person name="Venter J.C."/>
            <person name="Woodage T."/>
            <person name="Smith D."/>
            <person name="Lee H.-M."/>
            <person name="Gustafson E."/>
            <person name="Cahill P."/>
            <person name="Kana A."/>
            <person name="Doucette-Stamm L."/>
            <person name="Weinstock K."/>
            <person name="Fechtel K."/>
            <person name="Weiss R.B."/>
            <person name="Dunn D.M."/>
            <person name="Green E.D."/>
            <person name="Blakesley R.W."/>
            <person name="Bouffard G.G."/>
            <person name="De Jong P.J."/>
            <person name="Osoegawa K."/>
            <person name="Zhu B."/>
            <person name="Marra M."/>
            <person name="Schein J."/>
            <person name="Bosdet I."/>
            <person name="Fjell C."/>
            <person name="Jones S."/>
            <person name="Krzywinski M."/>
            <person name="Mathewson C."/>
            <person name="Siddiqui A."/>
            <person name="Wye N."/>
            <person name="McPherson J."/>
            <person name="Zhao S."/>
            <person name="Fraser C.M."/>
            <person name="Shetty J."/>
            <person name="Shatsman S."/>
            <person name="Geer K."/>
            <person name="Chen Y."/>
            <person name="Abramzon S."/>
            <person name="Nierman W.C."/>
            <person name="Havlak P.H."/>
            <person name="Chen R."/>
            <person name="Durbin K.J."/>
            <person name="Egan A."/>
            <person name="Ren Y."/>
            <person name="Song X.-Z."/>
            <person name="Li B."/>
            <person name="Liu Y."/>
            <person name="Qin X."/>
            <person name="Cawley S."/>
            <person name="Cooney A.J."/>
            <person name="D'Souza L.M."/>
            <person name="Martin K."/>
            <person name="Wu J.Q."/>
            <person name="Gonzalez-Garay M.L."/>
            <person name="Jackson A.R."/>
            <person name="Kalafus K.J."/>
            <person name="McLeod M.P."/>
            <person name="Milosavljevic A."/>
            <person name="Virk D."/>
            <person name="Volkov A."/>
            <person name="Wheeler D.A."/>
            <person name="Zhang Z."/>
            <person name="Bailey J.A."/>
            <person name="Eichler E.E."/>
            <person name="Tuzun E."/>
            <person name="Birney E."/>
            <person name="Mongin E."/>
            <person name="Ureta-Vidal A."/>
            <person name="Woodwark C."/>
            <person name="Zdobnov E."/>
            <person name="Bork P."/>
            <person name="Suyama M."/>
            <person name="Torrents D."/>
            <person name="Alexandersson M."/>
            <person name="Trask B.J."/>
            <person name="Young J.M."/>
            <person name="Huang H."/>
            <person name="Wang H."/>
            <person name="Xing H."/>
            <person name="Daniels S."/>
            <person name="Gietzen D."/>
            <person name="Schmidt J."/>
            <person name="Stevens K."/>
            <person name="Vitt U."/>
            <person name="Wingrove J."/>
            <person name="Camara F."/>
            <person name="Mar Alba M."/>
            <person name="Abril J.F."/>
            <person name="Guigo R."/>
            <person name="Smit A."/>
            <person name="Dubchak I."/>
            <person name="Rubin E.M."/>
            <person name="Couronne O."/>
            <person name="Poliakov A."/>
            <person name="Huebner N."/>
            <person name="Ganten D."/>
            <person name="Goesele C."/>
            <person name="Hummel O."/>
            <person name="Kreitler T."/>
            <person name="Lee Y.-A."/>
            <person name="Monti J."/>
            <person name="Schulz H."/>
            <person name="Zimdahl H."/>
            <person name="Himmelbauer H."/>
            <person name="Lehrach H."/>
            <person name="Jacob H.J."/>
            <person name="Bromberg S."/>
            <person name="Gullings-Handley J."/>
            <person name="Jensen-Seaman M.I."/>
            <person name="Kwitek A.E."/>
            <person name="Lazar J."/>
            <person name="Pasko D."/>
            <person name="Tonellato P.J."/>
            <person name="Twigger S."/>
            <person name="Ponting C.P."/>
            <person name="Duarte J.M."/>
            <person name="Rice S."/>
            <person name="Goodstadt L."/>
            <person name="Beatson S.A."/>
            <person name="Emes R.D."/>
            <person name="Winter E.E."/>
            <person name="Webber C."/>
            <person name="Brandt P."/>
            <person name="Nyakatura G."/>
            <person name="Adetobi M."/>
            <person name="Chiaromonte F."/>
            <person name="Elnitski L."/>
            <person name="Eswara P."/>
            <person name="Hardison R.C."/>
            <person name="Hou M."/>
            <person name="Kolbe D."/>
            <person name="Makova K."/>
            <person name="Miller W."/>
            <person name="Nekrutenko A."/>
            <person name="Riemer C."/>
            <person name="Schwartz S."/>
            <person name="Taylor J."/>
            <person name="Yang S."/>
            <person name="Zhang Y."/>
            <person name="Lindpaintner K."/>
            <person name="Andrews T.D."/>
            <person name="Caccamo M."/>
            <person name="Clamp M."/>
            <person name="Clarke L."/>
            <person name="Curwen V."/>
            <person name="Durbin R.M."/>
            <person name="Eyras E."/>
            <person name="Searle S.M."/>
            <person name="Cooper G.M."/>
            <person name="Batzoglou S."/>
            <person name="Brudno M."/>
            <person name="Sidow A."/>
            <person name="Stone E.A."/>
            <person name="Payseur B.A."/>
            <person name="Bourque G."/>
            <person name="Lopez-Otin C."/>
            <person name="Puente X.S."/>
            <person name="Chakrabarti K."/>
            <person name="Chatterji S."/>
            <person name="Dewey C."/>
            <person name="Pachter L."/>
            <person name="Bray N."/>
            <person name="Yap V.B."/>
            <person name="Caspi A."/>
            <person name="Tesler G."/>
            <person name="Pevzner P.A."/>
            <person name="Haussler D."/>
            <person name="Roskin K.M."/>
            <person name="Baertsch R."/>
            <person name="Clawson H."/>
            <person name="Furey T.S."/>
            <person name="Hinrichs A.S."/>
            <person name="Karolchik D."/>
            <person name="Kent W.J."/>
            <person name="Rosenbloom K.R."/>
            <person name="Trumbower H."/>
            <person name="Weirauch M."/>
            <person name="Cooper D.N."/>
            <person name="Stenson P.D."/>
            <person name="Ma B."/>
            <person name="Brent M."/>
            <person name="Arumugam M."/>
            <person name="Shteynberg D."/>
            <person name="Copley R.R."/>
            <person name="Taylor M.S."/>
            <person name="Riethman H."/>
            <person name="Mudunuri U."/>
            <person name="Peterson J."/>
            <person name="Guyer M."/>
            <person name="Felsenfeld A."/>
            <person name="Old S."/>
            <person name="Mockrin S."/>
            <person name="Collins F.S."/>
        </authorList>
    </citation>
    <scope>NUCLEOTIDE SEQUENCE [LARGE SCALE GENOMIC DNA]</scope>
    <source>
        <strain>Brown Norway</strain>
    </source>
</reference>
<reference key="2">
    <citation type="journal article" date="2006" name="Ann. Neurol.">
        <title>Alsin/Rac1 signaling controls survival and growth of spinal motoneurons.</title>
        <authorList>
            <person name="Jacquier A."/>
            <person name="Buhler E."/>
            <person name="Schaefer M.K."/>
            <person name="Bohl D."/>
            <person name="Blanchard S."/>
            <person name="Beclin C."/>
            <person name="Haase G."/>
        </authorList>
    </citation>
    <scope>FUNCTION</scope>
</reference>
<reference key="3">
    <citation type="journal article" date="2005" name="Neurobiol. Dis.">
        <title>Cross-species characterization of the ALS2 gene and analysis of its pattern of expression in development and adulthood.</title>
        <authorList>
            <person name="Devon R.S."/>
            <person name="Schwab C."/>
            <person name="Topp J.D."/>
            <person name="Orban P.C."/>
            <person name="Yang Y.Z."/>
            <person name="Pape T.D."/>
            <person name="Helm J.R."/>
            <person name="Davidson T.L."/>
            <person name="Rogers D.A."/>
            <person name="Gros-Louis F."/>
            <person name="Rouleau G."/>
            <person name="Horazdovsky B.F."/>
            <person name="Leavitt B.R."/>
            <person name="Hayden M.R."/>
        </authorList>
    </citation>
    <scope>IDENTIFICATION</scope>
</reference>
<reference key="4">
    <citation type="journal article" date="2012" name="Nat. Commun.">
        <title>Quantitative maps of protein phosphorylation sites across 14 different rat organs and tissues.</title>
        <authorList>
            <person name="Lundby A."/>
            <person name="Secher A."/>
            <person name="Lage K."/>
            <person name="Nordsborg N.B."/>
            <person name="Dmytriyev A."/>
            <person name="Lundby C."/>
            <person name="Olsen J.V."/>
        </authorList>
    </citation>
    <scope>PHOSPHORYLATION [LARGE SCALE ANALYSIS] AT SER-477; SER-486; THR-504 AND SER-1329</scope>
    <scope>IDENTIFICATION BY MASS SPECTROMETRY [LARGE SCALE ANALYSIS]</scope>
</reference>
<sequence>MDSKKKSSAEAEGSKERGLVHVWQAGSFSLTPERLPGWGGKTVLQAALGVKHGVLLTEDGEVYSFGTLPWKSEAAEICPSSPLLESALVGHHVVTVATGSFHSGAVTESGVVYMWGENAAGQCAVANQQYVSEPSPVSISDSETSPLLAVRILQLACGEEHTLALSISREIWAWGTGCQLGLITTTFPVTKPQKVEHLAGRVVLQVACGAFHSLALVQCLPPQDLKPVPERCNQCSQLLITMTDKEDHVIISDSHCCPLGVTLSESQAEKHASTVTSPHPETLDGQGEVFENTVAEAELNMGSDQTTSGSAISAQQNIVGMAEVSSARTAPSYPDTQTVTAYLQKLSEHSVKENHEREEKLPQVQPLVEEAVPDLHSPPTTSTSALNSLVVSCASAVGVRVAATYEAGALSLKKVMNFYSTAPCEPGAPSGTASTGPESLKDLREEQVKQESLQGKKSSSLMDIREEESEGGSRRLSLPGLLSQVSPRLLRKAARVKTRTVVLTPTYSGEADALLPSLRTEVWTWGKGKEGQLGHGDVLPRLQPLCVKCLDGKEVIHLEAGGSHSLALTAKSQVYSWGSNTFGQLGHSEFPTTVPRLSKVSSESGVWSVAAGHGYSLFLVDTEDFQPGLYYSGRQDRAEGDTLPENPSGTTTPVLLSCSKLGYISRVTAGKDSYLALVDKNIMGYIASLHELATTERRFYSKLSEIKSQILRPLLSLEHLGTVTTVQLLQEVASRFSKLCYLIGQHGASLSSYLQGMKEARNLVIMKHSSLFLDSYTEYCTSVSNFLVMGGSQLLAKPAIDFLNKNQELLQDLSEVNDENTQLMEILNALFFLPIRRLHNYAKVLLKLATCFEVTSPEYQKLQDSSSCYESLALHLGKKRKEAEYTLSFWKTFPGKMTDSLRKPERRLLCESSNRALSLQHAGRFSVNWFILFNDALVHAQFSTHHVFPLATLWAEPLSEETGGVNGLKITTPEEQFTLISSTPQEKTKWLRAISQAVDQALRGTSDFPLYGGSSTVQRQEPPISRSAKYTFYKDTRLKDATYDGRWLSGKPHGRGVLKWPDGKVYSGTFRNGLEDGYGEYRIPNKALNKEDHYVGHWKEGKMCGQGVYSYASGEVFEGCFQDNMRHGHGLLRSGKLTSSSPSMFIGQWVMDKKAGYGVFDDITRGEKYMGMWQDDACQGNGVVVTQFGLYYEGNFHLNKMMGNGVLLSEDDTIYEGEFSDDWTLCGKGTLTMPNGDYIEGYFSGEWGSGIKITGTYFKPSLYESDKDRPKAFRKLGNLAVAADEKWRAVFDECWRQLGCESPGQGEVWKAWDNIAVALTTNRRQHKDSPEILSRSQTQTLESLEYIPQHVGAFSVEKYDDIKKYLIKACDTPLHPLGRLVETLVAVYRMTYVGVGANRRLLQEAVKEIKSYLKRIFQLVRFLFPELPEEGSTVPLSAPLPTGRRSFCTGKSDSRSESPEPGYVVTSSGLLLPVLLPRLYPPLFMLYALDNDREEDIYWECVLRLNKQPDIALLGFLGVQRKFWPATLSILGESKKVLPSTKDACFASAVECLQQISTTFTPSDKLKVIQQTFEEISQSVLASLQEDFLWSMDDLFPVFLYVVLRARIRNLGSEVHLIEDLMDPYLQHGEQGIMFTTLKACYYQIQREKLN</sequence>
<dbReference type="EMBL" id="AABR03068212">
    <property type="status" value="NOT_ANNOTATED_CDS"/>
    <property type="molecule type" value="Genomic_DNA"/>
</dbReference>
<dbReference type="EMBL" id="BK005190">
    <property type="protein sequence ID" value="DAA05671.1"/>
    <property type="molecule type" value="mRNA"/>
</dbReference>
<dbReference type="RefSeq" id="NP_001013431.1">
    <property type="nucleotide sequence ID" value="NM_001013413.1"/>
</dbReference>
<dbReference type="RefSeq" id="XP_006245063.1">
    <property type="nucleotide sequence ID" value="XM_006245001.5"/>
</dbReference>
<dbReference type="RefSeq" id="XP_063123446.1">
    <property type="nucleotide sequence ID" value="XM_063267376.1"/>
</dbReference>
<dbReference type="SMR" id="P0C5Y8"/>
<dbReference type="FunCoup" id="P0C5Y8">
    <property type="interactions" value="2610"/>
</dbReference>
<dbReference type="STRING" id="10116.ENSRNOP00000072428"/>
<dbReference type="iPTMnet" id="P0C5Y8"/>
<dbReference type="PhosphoSitePlus" id="P0C5Y8"/>
<dbReference type="PaxDb" id="10116-ENSRNOP00000036116"/>
<dbReference type="GeneID" id="363235"/>
<dbReference type="KEGG" id="rno:363235"/>
<dbReference type="UCSC" id="RGD:1310372">
    <property type="organism name" value="rat"/>
</dbReference>
<dbReference type="AGR" id="RGD:1310372"/>
<dbReference type="CTD" id="57679"/>
<dbReference type="RGD" id="1310372">
    <property type="gene designation" value="Als2"/>
</dbReference>
<dbReference type="VEuPathDB" id="HostDB:ENSRNOG00000023280"/>
<dbReference type="eggNOG" id="KOG0231">
    <property type="taxonomic scope" value="Eukaryota"/>
</dbReference>
<dbReference type="eggNOG" id="KOG1426">
    <property type="taxonomic scope" value="Eukaryota"/>
</dbReference>
<dbReference type="HOGENOM" id="CLU_003333_0_0_1"/>
<dbReference type="InParanoid" id="P0C5Y8"/>
<dbReference type="OrthoDB" id="28263at9989"/>
<dbReference type="PhylomeDB" id="P0C5Y8"/>
<dbReference type="TreeFam" id="TF331793"/>
<dbReference type="Reactome" id="R-RNO-8876198">
    <property type="pathway name" value="RAB GEFs exchange GTP for GDP on RABs"/>
</dbReference>
<dbReference type="Reactome" id="R-RNO-9013149">
    <property type="pathway name" value="RAC1 GTPase cycle"/>
</dbReference>
<dbReference type="PRO" id="PR:P0C5Y8"/>
<dbReference type="Proteomes" id="UP000002494">
    <property type="component" value="Chromosome 9"/>
</dbReference>
<dbReference type="Bgee" id="ENSRNOG00000023280">
    <property type="expression patterns" value="Expressed in cerebellum and 20 other cell types or tissues"/>
</dbReference>
<dbReference type="GO" id="GO:0030424">
    <property type="term" value="C:axon"/>
    <property type="evidence" value="ECO:0000314"/>
    <property type="project" value="RGD"/>
</dbReference>
<dbReference type="GO" id="GO:0005813">
    <property type="term" value="C:centrosome"/>
    <property type="evidence" value="ECO:0000266"/>
    <property type="project" value="RGD"/>
</dbReference>
<dbReference type="GO" id="GO:0005737">
    <property type="term" value="C:cytoplasm"/>
    <property type="evidence" value="ECO:0000314"/>
    <property type="project" value="UniProtKB"/>
</dbReference>
<dbReference type="GO" id="GO:0005829">
    <property type="term" value="C:cytosol"/>
    <property type="evidence" value="ECO:0000250"/>
    <property type="project" value="UniProtKB"/>
</dbReference>
<dbReference type="GO" id="GO:0030425">
    <property type="term" value="C:dendrite"/>
    <property type="evidence" value="ECO:0000314"/>
    <property type="project" value="RGD"/>
</dbReference>
<dbReference type="GO" id="GO:0043197">
    <property type="term" value="C:dendritic spine"/>
    <property type="evidence" value="ECO:0000266"/>
    <property type="project" value="RGD"/>
</dbReference>
<dbReference type="GO" id="GO:0005769">
    <property type="term" value="C:early endosome"/>
    <property type="evidence" value="ECO:0000250"/>
    <property type="project" value="UniProtKB"/>
</dbReference>
<dbReference type="GO" id="GO:0098978">
    <property type="term" value="C:glutamatergic synapse"/>
    <property type="evidence" value="ECO:0000266"/>
    <property type="project" value="RGD"/>
</dbReference>
<dbReference type="GO" id="GO:0030426">
    <property type="term" value="C:growth cone"/>
    <property type="evidence" value="ECO:0000314"/>
    <property type="project" value="UniProtKB"/>
</dbReference>
<dbReference type="GO" id="GO:0043231">
    <property type="term" value="C:intracellular membrane-bounded organelle"/>
    <property type="evidence" value="ECO:0000318"/>
    <property type="project" value="GO_Central"/>
</dbReference>
<dbReference type="GO" id="GO:0030027">
    <property type="term" value="C:lamellipodium"/>
    <property type="evidence" value="ECO:0000266"/>
    <property type="project" value="RGD"/>
</dbReference>
<dbReference type="GO" id="GO:0016020">
    <property type="term" value="C:membrane"/>
    <property type="evidence" value="ECO:0000314"/>
    <property type="project" value="UniProtKB"/>
</dbReference>
<dbReference type="GO" id="GO:0043025">
    <property type="term" value="C:neuronal cell body"/>
    <property type="evidence" value="ECO:0000314"/>
    <property type="project" value="RGD"/>
</dbReference>
<dbReference type="GO" id="GO:0005634">
    <property type="term" value="C:nucleus"/>
    <property type="evidence" value="ECO:0000266"/>
    <property type="project" value="RGD"/>
</dbReference>
<dbReference type="GO" id="GO:0014069">
    <property type="term" value="C:postsynaptic density"/>
    <property type="evidence" value="ECO:0000266"/>
    <property type="project" value="RGD"/>
</dbReference>
<dbReference type="GO" id="GO:0032991">
    <property type="term" value="C:protein-containing complex"/>
    <property type="evidence" value="ECO:0000250"/>
    <property type="project" value="UniProtKB"/>
</dbReference>
<dbReference type="GO" id="GO:0001726">
    <property type="term" value="C:ruffle"/>
    <property type="evidence" value="ECO:0000266"/>
    <property type="project" value="RGD"/>
</dbReference>
<dbReference type="GO" id="GO:0031982">
    <property type="term" value="C:vesicle"/>
    <property type="evidence" value="ECO:0000250"/>
    <property type="project" value="UniProtKB"/>
</dbReference>
<dbReference type="GO" id="GO:0005096">
    <property type="term" value="F:GTPase activator activity"/>
    <property type="evidence" value="ECO:0000266"/>
    <property type="project" value="RGD"/>
</dbReference>
<dbReference type="GO" id="GO:0005085">
    <property type="term" value="F:guanyl-nucleotide exchange factor activity"/>
    <property type="evidence" value="ECO:0000266"/>
    <property type="project" value="RGD"/>
</dbReference>
<dbReference type="GO" id="GO:0042802">
    <property type="term" value="F:identical protein binding"/>
    <property type="evidence" value="ECO:0000266"/>
    <property type="project" value="RGD"/>
</dbReference>
<dbReference type="GO" id="GO:0042803">
    <property type="term" value="F:protein homodimerization activity"/>
    <property type="evidence" value="ECO:0000250"/>
    <property type="project" value="UniProtKB"/>
</dbReference>
<dbReference type="GO" id="GO:0043539">
    <property type="term" value="F:protein serine/threonine kinase activator activity"/>
    <property type="evidence" value="ECO:0000250"/>
    <property type="project" value="UniProtKB"/>
</dbReference>
<dbReference type="GO" id="GO:0031267">
    <property type="term" value="F:small GTPase binding"/>
    <property type="evidence" value="ECO:0000250"/>
    <property type="project" value="UniProtKB"/>
</dbReference>
<dbReference type="GO" id="GO:0007409">
    <property type="term" value="P:axonogenesis"/>
    <property type="evidence" value="ECO:0000315"/>
    <property type="project" value="RGD"/>
</dbReference>
<dbReference type="GO" id="GO:0001662">
    <property type="term" value="P:behavioral fear response"/>
    <property type="evidence" value="ECO:0000266"/>
    <property type="project" value="RGD"/>
</dbReference>
<dbReference type="GO" id="GO:0016197">
    <property type="term" value="P:endosomal transport"/>
    <property type="evidence" value="ECO:0000266"/>
    <property type="project" value="RGD"/>
</dbReference>
<dbReference type="GO" id="GO:0001701">
    <property type="term" value="P:in utero embryonic development"/>
    <property type="evidence" value="ECO:0000270"/>
    <property type="project" value="RGD"/>
</dbReference>
<dbReference type="GO" id="GO:0007626">
    <property type="term" value="P:locomotory behavior"/>
    <property type="evidence" value="ECO:0000266"/>
    <property type="project" value="RGD"/>
</dbReference>
<dbReference type="GO" id="GO:0007041">
    <property type="term" value="P:lysosomal transport"/>
    <property type="evidence" value="ECO:0000266"/>
    <property type="project" value="RGD"/>
</dbReference>
<dbReference type="GO" id="GO:0007528">
    <property type="term" value="P:neuromuscular junction development"/>
    <property type="evidence" value="ECO:0000266"/>
    <property type="project" value="RGD"/>
</dbReference>
<dbReference type="GO" id="GO:0048812">
    <property type="term" value="P:neuron projection morphogenesis"/>
    <property type="evidence" value="ECO:0000250"/>
    <property type="project" value="UniProtKB"/>
</dbReference>
<dbReference type="GO" id="GO:0043547">
    <property type="term" value="P:positive regulation of GTPase activity"/>
    <property type="evidence" value="ECO:0000250"/>
    <property type="project" value="UniProtKB"/>
</dbReference>
<dbReference type="GO" id="GO:0045860">
    <property type="term" value="P:positive regulation of protein kinase activity"/>
    <property type="evidence" value="ECO:0000250"/>
    <property type="project" value="UniProtKB"/>
</dbReference>
<dbReference type="GO" id="GO:0051260">
    <property type="term" value="P:protein homooligomerization"/>
    <property type="evidence" value="ECO:0000266"/>
    <property type="project" value="RGD"/>
</dbReference>
<dbReference type="GO" id="GO:0008104">
    <property type="term" value="P:protein localization"/>
    <property type="evidence" value="ECO:0000266"/>
    <property type="project" value="RGD"/>
</dbReference>
<dbReference type="GO" id="GO:0016601">
    <property type="term" value="P:Rac protein signal transduction"/>
    <property type="evidence" value="ECO:0000314"/>
    <property type="project" value="RGD"/>
</dbReference>
<dbReference type="GO" id="GO:0001881">
    <property type="term" value="P:receptor recycling"/>
    <property type="evidence" value="ECO:0000266"/>
    <property type="project" value="RGD"/>
</dbReference>
<dbReference type="GO" id="GO:0051036">
    <property type="term" value="P:regulation of endosome size"/>
    <property type="evidence" value="ECO:0000315"/>
    <property type="project" value="RGD"/>
</dbReference>
<dbReference type="GO" id="GO:0099072">
    <property type="term" value="P:regulation of postsynaptic membrane neurotransmitter receptor levels"/>
    <property type="evidence" value="ECO:0000266"/>
    <property type="project" value="RGD"/>
</dbReference>
<dbReference type="GO" id="GO:0006979">
    <property type="term" value="P:response to oxidative stress"/>
    <property type="evidence" value="ECO:0000266"/>
    <property type="project" value="RGD"/>
</dbReference>
<dbReference type="GO" id="GO:0035249">
    <property type="term" value="P:synaptic transmission, glutamatergic"/>
    <property type="evidence" value="ECO:0000266"/>
    <property type="project" value="RGD"/>
</dbReference>
<dbReference type="GO" id="GO:0016050">
    <property type="term" value="P:vesicle organization"/>
    <property type="evidence" value="ECO:0000266"/>
    <property type="project" value="RGD"/>
</dbReference>
<dbReference type="CDD" id="cd13269">
    <property type="entry name" value="PH_alsin"/>
    <property type="match status" value="1"/>
</dbReference>
<dbReference type="FunFam" id="1.20.900.10:FF:000026">
    <property type="entry name" value="Alsin isoform X1"/>
    <property type="match status" value="1"/>
</dbReference>
<dbReference type="FunFam" id="1.20.1050.80:FF:000005">
    <property type="entry name" value="alsin isoform X1"/>
    <property type="match status" value="1"/>
</dbReference>
<dbReference type="FunFam" id="2.130.10.30:FF:000015">
    <property type="entry name" value="alsin isoform X1"/>
    <property type="match status" value="1"/>
</dbReference>
<dbReference type="FunFam" id="2.130.10.30:FF:000019">
    <property type="entry name" value="alsin isoform X1"/>
    <property type="match status" value="1"/>
</dbReference>
<dbReference type="FunFam" id="2.20.110.10:FF:000009">
    <property type="entry name" value="alsin isoform X1"/>
    <property type="match status" value="1"/>
</dbReference>
<dbReference type="Gene3D" id="1.20.900.10">
    <property type="entry name" value="Dbl homology (DH) domain"/>
    <property type="match status" value="1"/>
</dbReference>
<dbReference type="Gene3D" id="2.20.110.10">
    <property type="entry name" value="Histone H3 K4-specific methyltransferase SET7/9 N-terminal domain"/>
    <property type="match status" value="3"/>
</dbReference>
<dbReference type="Gene3D" id="2.30.29.30">
    <property type="entry name" value="Pleckstrin-homology domain (PH domain)/Phosphotyrosine-binding domain (PTB)"/>
    <property type="match status" value="1"/>
</dbReference>
<dbReference type="Gene3D" id="2.130.10.30">
    <property type="entry name" value="Regulator of chromosome condensation 1/beta-lactamase-inhibitor protein II"/>
    <property type="match status" value="2"/>
</dbReference>
<dbReference type="Gene3D" id="1.20.1050.80">
    <property type="entry name" value="VPS9 domain"/>
    <property type="match status" value="1"/>
</dbReference>
<dbReference type="InterPro" id="IPR051984">
    <property type="entry name" value="Alsin_GEFs/MotNeuronReg"/>
</dbReference>
<dbReference type="InterPro" id="IPR035899">
    <property type="entry name" value="DBL_dom_sf"/>
</dbReference>
<dbReference type="InterPro" id="IPR000219">
    <property type="entry name" value="DH_dom"/>
</dbReference>
<dbReference type="InterPro" id="IPR003409">
    <property type="entry name" value="MORN"/>
</dbReference>
<dbReference type="InterPro" id="IPR011993">
    <property type="entry name" value="PH-like_dom_sf"/>
</dbReference>
<dbReference type="InterPro" id="IPR009091">
    <property type="entry name" value="RCC1/BLIP-II"/>
</dbReference>
<dbReference type="InterPro" id="IPR000408">
    <property type="entry name" value="Reg_chr_condens"/>
</dbReference>
<dbReference type="InterPro" id="IPR003123">
    <property type="entry name" value="VPS9"/>
</dbReference>
<dbReference type="InterPro" id="IPR037191">
    <property type="entry name" value="VPS9_dom_sf"/>
</dbReference>
<dbReference type="PANTHER" id="PTHR46089:SF3">
    <property type="entry name" value="ALSIN"/>
    <property type="match status" value="1"/>
</dbReference>
<dbReference type="PANTHER" id="PTHR46089">
    <property type="entry name" value="ALSIN HOMOLOG"/>
    <property type="match status" value="1"/>
</dbReference>
<dbReference type="Pfam" id="PF25389">
    <property type="entry name" value="DH_alsin"/>
    <property type="match status" value="1"/>
</dbReference>
<dbReference type="Pfam" id="PF02493">
    <property type="entry name" value="MORN"/>
    <property type="match status" value="8"/>
</dbReference>
<dbReference type="Pfam" id="PF25383">
    <property type="entry name" value="PH_alsin"/>
    <property type="match status" value="1"/>
</dbReference>
<dbReference type="Pfam" id="PF00415">
    <property type="entry name" value="RCC1"/>
    <property type="match status" value="4"/>
</dbReference>
<dbReference type="Pfam" id="PF02204">
    <property type="entry name" value="VPS9"/>
    <property type="match status" value="1"/>
</dbReference>
<dbReference type="PRINTS" id="PR00633">
    <property type="entry name" value="RCCNDNSATION"/>
</dbReference>
<dbReference type="SMART" id="SM00698">
    <property type="entry name" value="MORN"/>
    <property type="match status" value="8"/>
</dbReference>
<dbReference type="SUPFAM" id="SSF48065">
    <property type="entry name" value="DBL homology domain (DH-domain)"/>
    <property type="match status" value="1"/>
</dbReference>
<dbReference type="SUPFAM" id="SSF82185">
    <property type="entry name" value="Histone H3 K4-specific methyltransferase SET7/9 N-terminal domain"/>
    <property type="match status" value="2"/>
</dbReference>
<dbReference type="SUPFAM" id="SSF50729">
    <property type="entry name" value="PH domain-like"/>
    <property type="match status" value="1"/>
</dbReference>
<dbReference type="SUPFAM" id="SSF50985">
    <property type="entry name" value="RCC1/BLIP-II"/>
    <property type="match status" value="2"/>
</dbReference>
<dbReference type="SUPFAM" id="SSF109993">
    <property type="entry name" value="VPS9 domain"/>
    <property type="match status" value="1"/>
</dbReference>
<dbReference type="PROSITE" id="PS50010">
    <property type="entry name" value="DH_2"/>
    <property type="match status" value="1"/>
</dbReference>
<dbReference type="PROSITE" id="PS00626">
    <property type="entry name" value="RCC1_2"/>
    <property type="match status" value="2"/>
</dbReference>
<dbReference type="PROSITE" id="PS50012">
    <property type="entry name" value="RCC1_3"/>
    <property type="match status" value="4"/>
</dbReference>
<dbReference type="PROSITE" id="PS51205">
    <property type="entry name" value="VPS9"/>
    <property type="match status" value="1"/>
</dbReference>
<gene>
    <name type="primary">Als2</name>
</gene>
<protein>
    <recommendedName>
        <fullName>Alsin</fullName>
    </recommendedName>
    <alternativeName>
        <fullName>Amyotrophic lateral sclerosis 2 protein homolog</fullName>
    </alternativeName>
</protein>
<comment type="function">
    <text evidence="1 6">May act as a GTPase regulator (By similarity). Controls survival and growth of spinal motoneurons.</text>
</comment>
<comment type="subunit">
    <text evidence="1">Forms a heteromeric complex with ALS2CL. Interacts with ALS2CL (By similarity).</text>
</comment>
<name>ALS2_RAT</name>